<accession>Q5LXN3</accession>
<gene>
    <name type="ordered locus">str1967</name>
</gene>
<protein>
    <recommendedName>
        <fullName evidence="1">UPF0246 protein str1967</fullName>
    </recommendedName>
</protein>
<evidence type="ECO:0000255" key="1">
    <source>
        <dbReference type="HAMAP-Rule" id="MF_00652"/>
    </source>
</evidence>
<evidence type="ECO:0000305" key="2"/>
<name>Y1967_STRT1</name>
<dbReference type="EMBL" id="CP000024">
    <property type="protein sequence ID" value="AAV63479.1"/>
    <property type="status" value="ALT_INIT"/>
    <property type="molecule type" value="Genomic_DNA"/>
</dbReference>
<dbReference type="RefSeq" id="WP_041827168.1">
    <property type="nucleotide sequence ID" value="NC_006449.1"/>
</dbReference>
<dbReference type="SMR" id="Q5LXN3"/>
<dbReference type="KEGG" id="stc:str1967"/>
<dbReference type="HOGENOM" id="CLU_061989_2_1_9"/>
<dbReference type="GO" id="GO:0005829">
    <property type="term" value="C:cytosol"/>
    <property type="evidence" value="ECO:0007669"/>
    <property type="project" value="TreeGrafter"/>
</dbReference>
<dbReference type="GO" id="GO:0033194">
    <property type="term" value="P:response to hydroperoxide"/>
    <property type="evidence" value="ECO:0007669"/>
    <property type="project" value="TreeGrafter"/>
</dbReference>
<dbReference type="HAMAP" id="MF_00652">
    <property type="entry name" value="UPF0246"/>
    <property type="match status" value="1"/>
</dbReference>
<dbReference type="InterPro" id="IPR005583">
    <property type="entry name" value="YaaA"/>
</dbReference>
<dbReference type="NCBIfam" id="NF002543">
    <property type="entry name" value="PRK02101.1-4"/>
    <property type="match status" value="1"/>
</dbReference>
<dbReference type="PANTHER" id="PTHR30283:SF4">
    <property type="entry name" value="PEROXIDE STRESS RESISTANCE PROTEIN YAAA"/>
    <property type="match status" value="1"/>
</dbReference>
<dbReference type="PANTHER" id="PTHR30283">
    <property type="entry name" value="PEROXIDE STRESS RESPONSE PROTEIN YAAA"/>
    <property type="match status" value="1"/>
</dbReference>
<dbReference type="Pfam" id="PF03883">
    <property type="entry name" value="H2O2_YaaD"/>
    <property type="match status" value="1"/>
</dbReference>
<comment type="similarity">
    <text evidence="1">Belongs to the UPF0246 family.</text>
</comment>
<comment type="sequence caution" evidence="2">
    <conflict type="erroneous initiation">
        <sequence resource="EMBL-CDS" id="AAV63479"/>
    </conflict>
</comment>
<organism>
    <name type="scientific">Streptococcus thermophilus (strain CNRZ 1066)</name>
    <dbReference type="NCBI Taxonomy" id="299768"/>
    <lineage>
        <taxon>Bacteria</taxon>
        <taxon>Bacillati</taxon>
        <taxon>Bacillota</taxon>
        <taxon>Bacilli</taxon>
        <taxon>Lactobacillales</taxon>
        <taxon>Streptococcaceae</taxon>
        <taxon>Streptococcus</taxon>
    </lineage>
</organism>
<feature type="chain" id="PRO_0000262073" description="UPF0246 protein str1967">
    <location>
        <begin position="1"/>
        <end position="246"/>
    </location>
</feature>
<sequence>MIRFLIPTAKEMKPSKEVPSQKLSEKSEAILTEMAKLSTDDLSIAYKIKPEQAEKEKQRWDAILAGEAKNYPAVELFNGLMYRHIKRKDLSTCEKDFLSHQVFITSSFYGIIPAFYPIQEHRHDFHTKVKVNGQSLKNYWRAEYDQFLEESQVPVVSLLSSEFEDVFSPSLRKQLFTVSFMEDRNGILKTHSTISKKARGAFLTAVMEESCQTIDALRDLSFDDFYYRKDLSSDSELFFVRKVKKV</sequence>
<proteinExistence type="inferred from homology"/>
<reference key="1">
    <citation type="journal article" date="2004" name="Nat. Biotechnol.">
        <title>Complete sequence and comparative genome analysis of the dairy bacterium Streptococcus thermophilus.</title>
        <authorList>
            <person name="Bolotin A."/>
            <person name="Quinquis B."/>
            <person name="Renault P."/>
            <person name="Sorokin A."/>
            <person name="Ehrlich S.D."/>
            <person name="Kulakauskas S."/>
            <person name="Lapidus A."/>
            <person name="Goltsman E."/>
            <person name="Mazur M."/>
            <person name="Pusch G.D."/>
            <person name="Fonstein M."/>
            <person name="Overbeek R."/>
            <person name="Kyprides N."/>
            <person name="Purnelle B."/>
            <person name="Prozzi D."/>
            <person name="Ngui K."/>
            <person name="Masuy D."/>
            <person name="Hancy F."/>
            <person name="Burteau S."/>
            <person name="Boutry M."/>
            <person name="Delcour J."/>
            <person name="Goffeau A."/>
            <person name="Hols P."/>
        </authorList>
    </citation>
    <scope>NUCLEOTIDE SEQUENCE [LARGE SCALE GENOMIC DNA]</scope>
    <source>
        <strain>CNRZ 1066</strain>
    </source>
</reference>